<keyword id="KW-0238">DNA-binding</keyword>
<keyword id="KW-1185">Reference proteome</keyword>
<keyword id="KW-0804">Transcription</keyword>
<keyword id="KW-0805">Transcription regulation</keyword>
<gene>
    <name type="primary">yybA</name>
    <name type="ordered locus">BSU40710</name>
</gene>
<sequence>MNDILREIGMIARALDSISNIEFKDLDLTRGQYLYLVRIYENPGIIQEKLAEMIKVDRTTAARAIKKLEMQGFIQKLPDEQNKKIKKLFPTEKGKKVYPLLRREGEHSTEVALSGFTSEEKETISALLHRVRKNIERDWEYVKKGNKRDY</sequence>
<organism>
    <name type="scientific">Bacillus subtilis (strain 168)</name>
    <dbReference type="NCBI Taxonomy" id="224308"/>
    <lineage>
        <taxon>Bacteria</taxon>
        <taxon>Bacillati</taxon>
        <taxon>Bacillota</taxon>
        <taxon>Bacilli</taxon>
        <taxon>Bacillales</taxon>
        <taxon>Bacillaceae</taxon>
        <taxon>Bacillus</taxon>
    </lineage>
</organism>
<proteinExistence type="predicted"/>
<protein>
    <recommendedName>
        <fullName>Uncharacterized HTH-type transcriptional regulator YybA</fullName>
    </recommendedName>
</protein>
<accession>P37503</accession>
<feature type="chain" id="PRO_0000054406" description="Uncharacterized HTH-type transcriptional regulator YybA">
    <location>
        <begin position="1"/>
        <end position="150"/>
    </location>
</feature>
<feature type="domain" description="HTH marR-type" evidence="1">
    <location>
        <begin position="1"/>
        <end position="133"/>
    </location>
</feature>
<feature type="DNA-binding region" description="H-T-H motif" evidence="1">
    <location>
        <begin position="47"/>
        <end position="70"/>
    </location>
</feature>
<reference key="1">
    <citation type="journal article" date="1994" name="DNA Res.">
        <title>Systematic sequencing of the 180 kilobase region of the Bacillus subtilis chromosome containing the replication origin.</title>
        <authorList>
            <person name="Ogasawara N."/>
            <person name="Nakai S."/>
            <person name="Yoshikawa H."/>
        </authorList>
    </citation>
    <scope>NUCLEOTIDE SEQUENCE [GENOMIC DNA]</scope>
    <source>
        <strain>168</strain>
    </source>
</reference>
<reference key="2">
    <citation type="journal article" date="1997" name="Nature">
        <title>The complete genome sequence of the Gram-positive bacterium Bacillus subtilis.</title>
        <authorList>
            <person name="Kunst F."/>
            <person name="Ogasawara N."/>
            <person name="Moszer I."/>
            <person name="Albertini A.M."/>
            <person name="Alloni G."/>
            <person name="Azevedo V."/>
            <person name="Bertero M.G."/>
            <person name="Bessieres P."/>
            <person name="Bolotin A."/>
            <person name="Borchert S."/>
            <person name="Borriss R."/>
            <person name="Boursier L."/>
            <person name="Brans A."/>
            <person name="Braun M."/>
            <person name="Brignell S.C."/>
            <person name="Bron S."/>
            <person name="Brouillet S."/>
            <person name="Bruschi C.V."/>
            <person name="Caldwell B."/>
            <person name="Capuano V."/>
            <person name="Carter N.M."/>
            <person name="Choi S.-K."/>
            <person name="Codani J.-J."/>
            <person name="Connerton I.F."/>
            <person name="Cummings N.J."/>
            <person name="Daniel R.A."/>
            <person name="Denizot F."/>
            <person name="Devine K.M."/>
            <person name="Duesterhoeft A."/>
            <person name="Ehrlich S.D."/>
            <person name="Emmerson P.T."/>
            <person name="Entian K.-D."/>
            <person name="Errington J."/>
            <person name="Fabret C."/>
            <person name="Ferrari E."/>
            <person name="Foulger D."/>
            <person name="Fritz C."/>
            <person name="Fujita M."/>
            <person name="Fujita Y."/>
            <person name="Fuma S."/>
            <person name="Galizzi A."/>
            <person name="Galleron N."/>
            <person name="Ghim S.-Y."/>
            <person name="Glaser P."/>
            <person name="Goffeau A."/>
            <person name="Golightly E.J."/>
            <person name="Grandi G."/>
            <person name="Guiseppi G."/>
            <person name="Guy B.J."/>
            <person name="Haga K."/>
            <person name="Haiech J."/>
            <person name="Harwood C.R."/>
            <person name="Henaut A."/>
            <person name="Hilbert H."/>
            <person name="Holsappel S."/>
            <person name="Hosono S."/>
            <person name="Hullo M.-F."/>
            <person name="Itaya M."/>
            <person name="Jones L.-M."/>
            <person name="Joris B."/>
            <person name="Karamata D."/>
            <person name="Kasahara Y."/>
            <person name="Klaerr-Blanchard M."/>
            <person name="Klein C."/>
            <person name="Kobayashi Y."/>
            <person name="Koetter P."/>
            <person name="Koningstein G."/>
            <person name="Krogh S."/>
            <person name="Kumano M."/>
            <person name="Kurita K."/>
            <person name="Lapidus A."/>
            <person name="Lardinois S."/>
            <person name="Lauber J."/>
            <person name="Lazarevic V."/>
            <person name="Lee S.-M."/>
            <person name="Levine A."/>
            <person name="Liu H."/>
            <person name="Masuda S."/>
            <person name="Mauel C."/>
            <person name="Medigue C."/>
            <person name="Medina N."/>
            <person name="Mellado R.P."/>
            <person name="Mizuno M."/>
            <person name="Moestl D."/>
            <person name="Nakai S."/>
            <person name="Noback M."/>
            <person name="Noone D."/>
            <person name="O'Reilly M."/>
            <person name="Ogawa K."/>
            <person name="Ogiwara A."/>
            <person name="Oudega B."/>
            <person name="Park S.-H."/>
            <person name="Parro V."/>
            <person name="Pohl T.M."/>
            <person name="Portetelle D."/>
            <person name="Porwollik S."/>
            <person name="Prescott A.M."/>
            <person name="Presecan E."/>
            <person name="Pujic P."/>
            <person name="Purnelle B."/>
            <person name="Rapoport G."/>
            <person name="Rey M."/>
            <person name="Reynolds S."/>
            <person name="Rieger M."/>
            <person name="Rivolta C."/>
            <person name="Rocha E."/>
            <person name="Roche B."/>
            <person name="Rose M."/>
            <person name="Sadaie Y."/>
            <person name="Sato T."/>
            <person name="Scanlan E."/>
            <person name="Schleich S."/>
            <person name="Schroeter R."/>
            <person name="Scoffone F."/>
            <person name="Sekiguchi J."/>
            <person name="Sekowska A."/>
            <person name="Seror S.J."/>
            <person name="Serror P."/>
            <person name="Shin B.-S."/>
            <person name="Soldo B."/>
            <person name="Sorokin A."/>
            <person name="Tacconi E."/>
            <person name="Takagi T."/>
            <person name="Takahashi H."/>
            <person name="Takemaru K."/>
            <person name="Takeuchi M."/>
            <person name="Tamakoshi A."/>
            <person name="Tanaka T."/>
            <person name="Terpstra P."/>
            <person name="Tognoni A."/>
            <person name="Tosato V."/>
            <person name="Uchiyama S."/>
            <person name="Vandenbol M."/>
            <person name="Vannier F."/>
            <person name="Vassarotti A."/>
            <person name="Viari A."/>
            <person name="Wambutt R."/>
            <person name="Wedler E."/>
            <person name="Wedler H."/>
            <person name="Weitzenegger T."/>
            <person name="Winters P."/>
            <person name="Wipat A."/>
            <person name="Yamamoto H."/>
            <person name="Yamane K."/>
            <person name="Yasumoto K."/>
            <person name="Yata K."/>
            <person name="Yoshida K."/>
            <person name="Yoshikawa H.-F."/>
            <person name="Zumstein E."/>
            <person name="Yoshikawa H."/>
            <person name="Danchin A."/>
        </authorList>
    </citation>
    <scope>NUCLEOTIDE SEQUENCE [LARGE SCALE GENOMIC DNA]</scope>
    <source>
        <strain>168</strain>
    </source>
</reference>
<name>YYBA_BACSU</name>
<dbReference type="EMBL" id="D26185">
    <property type="protein sequence ID" value="BAA05202.1"/>
    <property type="molecule type" value="Genomic_DNA"/>
</dbReference>
<dbReference type="EMBL" id="AL009126">
    <property type="protein sequence ID" value="CAB16108.1"/>
    <property type="molecule type" value="Genomic_DNA"/>
</dbReference>
<dbReference type="PIR" id="S65996">
    <property type="entry name" value="S65996"/>
</dbReference>
<dbReference type="RefSeq" id="NP_391951.1">
    <property type="nucleotide sequence ID" value="NC_000964.3"/>
</dbReference>
<dbReference type="RefSeq" id="WP_003226875.1">
    <property type="nucleotide sequence ID" value="NZ_OZ025638.1"/>
</dbReference>
<dbReference type="SMR" id="P37503"/>
<dbReference type="FunCoup" id="P37503">
    <property type="interactions" value="137"/>
</dbReference>
<dbReference type="STRING" id="224308.BSU40710"/>
<dbReference type="PaxDb" id="224308-BSU40710"/>
<dbReference type="EnsemblBacteria" id="CAB16108">
    <property type="protein sequence ID" value="CAB16108"/>
    <property type="gene ID" value="BSU_40710"/>
</dbReference>
<dbReference type="GeneID" id="937872"/>
<dbReference type="KEGG" id="bsu:BSU40710"/>
<dbReference type="PATRIC" id="fig|224308.179.peg.4413"/>
<dbReference type="eggNOG" id="COG1846">
    <property type="taxonomic scope" value="Bacteria"/>
</dbReference>
<dbReference type="InParanoid" id="P37503"/>
<dbReference type="OrthoDB" id="6462103at2"/>
<dbReference type="PhylomeDB" id="P37503"/>
<dbReference type="BioCyc" id="BSUB:BSU40710-MONOMER"/>
<dbReference type="Proteomes" id="UP000001570">
    <property type="component" value="Chromosome"/>
</dbReference>
<dbReference type="GO" id="GO:0003677">
    <property type="term" value="F:DNA binding"/>
    <property type="evidence" value="ECO:0007669"/>
    <property type="project" value="UniProtKB-KW"/>
</dbReference>
<dbReference type="GO" id="GO:0003700">
    <property type="term" value="F:DNA-binding transcription factor activity"/>
    <property type="evidence" value="ECO:0007669"/>
    <property type="project" value="InterPro"/>
</dbReference>
<dbReference type="Gene3D" id="1.10.10.10">
    <property type="entry name" value="Winged helix-like DNA-binding domain superfamily/Winged helix DNA-binding domain"/>
    <property type="match status" value="1"/>
</dbReference>
<dbReference type="InterPro" id="IPR000835">
    <property type="entry name" value="HTH_MarR-typ"/>
</dbReference>
<dbReference type="InterPro" id="IPR023187">
    <property type="entry name" value="Tscrpt_reg_MarR-type_CS"/>
</dbReference>
<dbReference type="InterPro" id="IPR036388">
    <property type="entry name" value="WH-like_DNA-bd_sf"/>
</dbReference>
<dbReference type="InterPro" id="IPR036390">
    <property type="entry name" value="WH_DNA-bd_sf"/>
</dbReference>
<dbReference type="PANTHER" id="PTHR42756:SF2">
    <property type="entry name" value="MARR FAMILY REGULATORY PROTEIN"/>
    <property type="match status" value="1"/>
</dbReference>
<dbReference type="PANTHER" id="PTHR42756">
    <property type="entry name" value="TRANSCRIPTIONAL REGULATOR, MARR"/>
    <property type="match status" value="1"/>
</dbReference>
<dbReference type="Pfam" id="PF01047">
    <property type="entry name" value="MarR"/>
    <property type="match status" value="1"/>
</dbReference>
<dbReference type="PRINTS" id="PR00598">
    <property type="entry name" value="HTHMARR"/>
</dbReference>
<dbReference type="SMART" id="SM00347">
    <property type="entry name" value="HTH_MARR"/>
    <property type="match status" value="1"/>
</dbReference>
<dbReference type="SUPFAM" id="SSF46785">
    <property type="entry name" value="Winged helix' DNA-binding domain"/>
    <property type="match status" value="1"/>
</dbReference>
<dbReference type="PROSITE" id="PS01117">
    <property type="entry name" value="HTH_MARR_1"/>
    <property type="match status" value="1"/>
</dbReference>
<dbReference type="PROSITE" id="PS50995">
    <property type="entry name" value="HTH_MARR_2"/>
    <property type="match status" value="1"/>
</dbReference>
<evidence type="ECO:0000255" key="1">
    <source>
        <dbReference type="PROSITE-ProRule" id="PRU00345"/>
    </source>
</evidence>